<gene>
    <name type="primary">PCMP-H89</name>
    <name type="ordered locus">At5g13230</name>
    <name type="ORF">T31B5_50</name>
</gene>
<reference key="1">
    <citation type="journal article" date="2000" name="Nature">
        <title>Sequence and analysis of chromosome 5 of the plant Arabidopsis thaliana.</title>
        <authorList>
            <person name="Tabata S."/>
            <person name="Kaneko T."/>
            <person name="Nakamura Y."/>
            <person name="Kotani H."/>
            <person name="Kato T."/>
            <person name="Asamizu E."/>
            <person name="Miyajima N."/>
            <person name="Sasamoto S."/>
            <person name="Kimura T."/>
            <person name="Hosouchi T."/>
            <person name="Kawashima K."/>
            <person name="Kohara M."/>
            <person name="Matsumoto M."/>
            <person name="Matsuno A."/>
            <person name="Muraki A."/>
            <person name="Nakayama S."/>
            <person name="Nakazaki N."/>
            <person name="Naruo K."/>
            <person name="Okumura S."/>
            <person name="Shinpo S."/>
            <person name="Takeuchi C."/>
            <person name="Wada T."/>
            <person name="Watanabe A."/>
            <person name="Yamada M."/>
            <person name="Yasuda M."/>
            <person name="Sato S."/>
            <person name="de la Bastide M."/>
            <person name="Huang E."/>
            <person name="Spiegel L."/>
            <person name="Gnoj L."/>
            <person name="O'Shaughnessy A."/>
            <person name="Preston R."/>
            <person name="Habermann K."/>
            <person name="Murray J."/>
            <person name="Johnson D."/>
            <person name="Rohlfing T."/>
            <person name="Nelson J."/>
            <person name="Stoneking T."/>
            <person name="Pepin K."/>
            <person name="Spieth J."/>
            <person name="Sekhon M."/>
            <person name="Armstrong J."/>
            <person name="Becker M."/>
            <person name="Belter E."/>
            <person name="Cordum H."/>
            <person name="Cordes M."/>
            <person name="Courtney L."/>
            <person name="Courtney W."/>
            <person name="Dante M."/>
            <person name="Du H."/>
            <person name="Edwards J."/>
            <person name="Fryman J."/>
            <person name="Haakensen B."/>
            <person name="Lamar E."/>
            <person name="Latreille P."/>
            <person name="Leonard S."/>
            <person name="Meyer R."/>
            <person name="Mulvaney E."/>
            <person name="Ozersky P."/>
            <person name="Riley A."/>
            <person name="Strowmatt C."/>
            <person name="Wagner-McPherson C."/>
            <person name="Wollam A."/>
            <person name="Yoakum M."/>
            <person name="Bell M."/>
            <person name="Dedhia N."/>
            <person name="Parnell L."/>
            <person name="Shah R."/>
            <person name="Rodriguez M."/>
            <person name="Hoon See L."/>
            <person name="Vil D."/>
            <person name="Baker J."/>
            <person name="Kirchoff K."/>
            <person name="Toth K."/>
            <person name="King L."/>
            <person name="Bahret A."/>
            <person name="Miller B."/>
            <person name="Marra M.A."/>
            <person name="Martienssen R."/>
            <person name="McCombie W.R."/>
            <person name="Wilson R.K."/>
            <person name="Murphy G."/>
            <person name="Bancroft I."/>
            <person name="Volckaert G."/>
            <person name="Wambutt R."/>
            <person name="Duesterhoeft A."/>
            <person name="Stiekema W."/>
            <person name="Pohl T."/>
            <person name="Entian K.-D."/>
            <person name="Terryn N."/>
            <person name="Hartley N."/>
            <person name="Bent E."/>
            <person name="Johnson S."/>
            <person name="Langham S.-A."/>
            <person name="McCullagh B."/>
            <person name="Robben J."/>
            <person name="Grymonprez B."/>
            <person name="Zimmermann W."/>
            <person name="Ramsperger U."/>
            <person name="Wedler H."/>
            <person name="Balke K."/>
            <person name="Wedler E."/>
            <person name="Peters S."/>
            <person name="van Staveren M."/>
            <person name="Dirkse W."/>
            <person name="Mooijman P."/>
            <person name="Klein Lankhorst R."/>
            <person name="Weitzenegger T."/>
            <person name="Bothe G."/>
            <person name="Rose M."/>
            <person name="Hauf J."/>
            <person name="Berneiser S."/>
            <person name="Hempel S."/>
            <person name="Feldpausch M."/>
            <person name="Lamberth S."/>
            <person name="Villarroel R."/>
            <person name="Gielen J."/>
            <person name="Ardiles W."/>
            <person name="Bents O."/>
            <person name="Lemcke K."/>
            <person name="Kolesov G."/>
            <person name="Mayer K.F.X."/>
            <person name="Rudd S."/>
            <person name="Schoof H."/>
            <person name="Schueller C."/>
            <person name="Zaccaria P."/>
            <person name="Mewes H.-W."/>
            <person name="Bevan M."/>
            <person name="Fransz P.F."/>
        </authorList>
    </citation>
    <scope>NUCLEOTIDE SEQUENCE [LARGE SCALE GENOMIC DNA]</scope>
    <source>
        <strain>cv. Columbia</strain>
    </source>
</reference>
<reference key="2">
    <citation type="journal article" date="2017" name="Plant J.">
        <title>Araport11: a complete reannotation of the Arabidopsis thaliana reference genome.</title>
        <authorList>
            <person name="Cheng C.Y."/>
            <person name="Krishnakumar V."/>
            <person name="Chan A.P."/>
            <person name="Thibaud-Nissen F."/>
            <person name="Schobel S."/>
            <person name="Town C.D."/>
        </authorList>
    </citation>
    <scope>GENOME REANNOTATION</scope>
    <source>
        <strain>cv. Columbia</strain>
    </source>
</reference>
<reference key="3">
    <citation type="journal article" date="2004" name="Plant Cell">
        <title>Genome-wide analysis of Arabidopsis pentatricopeptide repeat proteins reveals their essential role in organelle biogenesis.</title>
        <authorList>
            <person name="Lurin C."/>
            <person name="Andres C."/>
            <person name="Aubourg S."/>
            <person name="Bellaoui M."/>
            <person name="Bitton F."/>
            <person name="Bruyere C."/>
            <person name="Caboche M."/>
            <person name="Debast C."/>
            <person name="Gualberto J."/>
            <person name="Hoffmann B."/>
            <person name="Lecharny A."/>
            <person name="Le Ret M."/>
            <person name="Martin-Magniette M.-L."/>
            <person name="Mireau H."/>
            <person name="Peeters N."/>
            <person name="Renou J.-P."/>
            <person name="Szurek B."/>
            <person name="Taconnat L."/>
            <person name="Small I."/>
        </authorList>
    </citation>
    <scope>GENE FAMILY</scope>
</reference>
<protein>
    <recommendedName>
        <fullName>Putative pentatricopeptide repeat-containing protein At5g13230, mitochondrial</fullName>
    </recommendedName>
</protein>
<sequence>MIVFMRIIHVAQTRRLMIRCNRIRQCGFSVKTAALDLESSDSIIPGLDSHAYGAMLRRCIQKNDPISAKAIHCDILKKGSCLDLFATNILLNAYVKAGFDKDALNLFDEMPERNNVSFVTLAQGYACQDPIGLYSRLHREGHELNPHVFTSFLKLFVSLDKAEICPWLHSPIVKLGYDSNAFVGAALINAYSVCGSVDSARTVFEGILCKDIVVWAGIVSCYVENGYFEDSLKLLSCMRMAGFMPNNYTFDTALKASIGLGAFDFAKGVHGQILKTCYVLDPRVGVGLLQLYTQLGDMSDAFKVFNEMPKNDVVPWSFMIARFCQNGFCNEAVDLFIRMREAFVVPNEFTLSSILNGCAIGKCSGLGEQLHGLVVKVGFDLDIYVSNALIDVYAKCEKMDTAVKLFAELSSKNEVSWNTVIVGYENLGEGGKAFSMFREALRNQVSVTEVTFSSALGACASLASMDLGVQVHGLAIKTNNAKKVAVSNSLIDMYAKCGDIKFAQSVFNEMETIDVASWNALISGYSTHGLGRQALRILDIMKDRDCKPNGLTFLGVLSGCSNAGLIDQGQECFESMIRDHGIEPCLEHYTCMVRLLGRSGQLDKAMKLIEGIPYEPSVMIWRAMLSASMNQNNEEFARRSAEEILKINPKDEATYVLVSNMYAGAKQWANVASIRKSMKEMGVKKEPGLSWIEHQGDVHYFSVGLSDHPDMKLINGMLEWLNMKATRAGYVPDRNAVLLDMDDEEKDKRLWVHSERLALAYGLVRMPSSRNRILIMKNLRICSDCHSAMKVISSIVQRDLVIRDMNRFHHFHAGVCSCGDHW</sequence>
<accession>Q9LYV3</accession>
<organism>
    <name type="scientific">Arabidopsis thaliana</name>
    <name type="common">Mouse-ear cress</name>
    <dbReference type="NCBI Taxonomy" id="3702"/>
    <lineage>
        <taxon>Eukaryota</taxon>
        <taxon>Viridiplantae</taxon>
        <taxon>Streptophyta</taxon>
        <taxon>Embryophyta</taxon>
        <taxon>Tracheophyta</taxon>
        <taxon>Spermatophyta</taxon>
        <taxon>Magnoliopsida</taxon>
        <taxon>eudicotyledons</taxon>
        <taxon>Gunneridae</taxon>
        <taxon>Pentapetalae</taxon>
        <taxon>rosids</taxon>
        <taxon>malvids</taxon>
        <taxon>Brassicales</taxon>
        <taxon>Brassicaceae</taxon>
        <taxon>Camelineae</taxon>
        <taxon>Arabidopsis</taxon>
    </lineage>
</organism>
<evidence type="ECO:0000255" key="1"/>
<evidence type="ECO:0000305" key="2"/>
<keyword id="KW-0496">Mitochondrion</keyword>
<keyword id="KW-1185">Reference proteome</keyword>
<keyword id="KW-0677">Repeat</keyword>
<keyword id="KW-0809">Transit peptide</keyword>
<comment type="subcellular location">
    <subcellularLocation>
        <location evidence="2">Mitochondrion</location>
    </subcellularLocation>
</comment>
<comment type="similarity">
    <text evidence="2">Belongs to the PPR family. PCMP-H subfamily.</text>
</comment>
<comment type="online information" name="Pentatricopeptide repeat proteins">
    <link uri="https://ppr.plantenergy.uwa.edu.au"/>
</comment>
<proteinExistence type="inferred from homology"/>
<feature type="transit peptide" description="Mitochondrion" evidence="1">
    <location>
        <begin position="1"/>
        <end position="70"/>
    </location>
</feature>
<feature type="chain" id="PRO_0000363514" description="Putative pentatricopeptide repeat-containing protein At5g13230, mitochondrial">
    <location>
        <begin position="71"/>
        <end position="822"/>
    </location>
</feature>
<feature type="repeat" description="PPR 1">
    <location>
        <begin position="48"/>
        <end position="82"/>
    </location>
</feature>
<feature type="repeat" description="PPR 2">
    <location>
        <begin position="83"/>
        <end position="117"/>
    </location>
</feature>
<feature type="repeat" description="PPR 3">
    <location>
        <begin position="145"/>
        <end position="179"/>
    </location>
</feature>
<feature type="repeat" description="PPR 4">
    <location>
        <begin position="180"/>
        <end position="210"/>
    </location>
</feature>
<feature type="repeat" description="PPR 5">
    <location>
        <begin position="211"/>
        <end position="245"/>
    </location>
</feature>
<feature type="repeat" description="PPR 6">
    <location>
        <begin position="246"/>
        <end position="280"/>
    </location>
</feature>
<feature type="repeat" description="PPR 7">
    <location>
        <begin position="281"/>
        <end position="311"/>
    </location>
</feature>
<feature type="repeat" description="PPR 8">
    <location>
        <begin position="312"/>
        <end position="346"/>
    </location>
</feature>
<feature type="repeat" description="PPR 9">
    <location>
        <begin position="347"/>
        <end position="381"/>
    </location>
</feature>
<feature type="repeat" description="PPR 10">
    <location>
        <begin position="382"/>
        <end position="416"/>
    </location>
</feature>
<feature type="repeat" description="PPR 11">
    <location>
        <begin position="417"/>
        <end position="447"/>
    </location>
</feature>
<feature type="repeat" description="PPR 12">
    <location>
        <begin position="448"/>
        <end position="482"/>
    </location>
</feature>
<feature type="repeat" description="PPR 13">
    <location>
        <begin position="483"/>
        <end position="513"/>
    </location>
</feature>
<feature type="repeat" description="PPR 14">
    <location>
        <begin position="514"/>
        <end position="548"/>
    </location>
</feature>
<feature type="repeat" description="PPR 15">
    <location>
        <begin position="549"/>
        <end position="584"/>
    </location>
</feature>
<feature type="repeat" description="PPR 16">
    <location>
        <begin position="585"/>
        <end position="619"/>
    </location>
</feature>
<feature type="region of interest" description="Type E motif">
    <location>
        <begin position="620"/>
        <end position="695"/>
    </location>
</feature>
<feature type="region of interest" description="Type E(+) motif">
    <location>
        <begin position="696"/>
        <end position="726"/>
    </location>
</feature>
<feature type="region of interest" description="Type DYW motif">
    <location>
        <begin position="727"/>
        <end position="822"/>
    </location>
</feature>
<dbReference type="EMBL" id="AL163491">
    <property type="protein sequence ID" value="CAB86630.1"/>
    <property type="molecule type" value="Genomic_DNA"/>
</dbReference>
<dbReference type="EMBL" id="CP002688">
    <property type="protein sequence ID" value="AED91869.1"/>
    <property type="molecule type" value="Genomic_DNA"/>
</dbReference>
<dbReference type="PIR" id="T48570">
    <property type="entry name" value="T48570"/>
</dbReference>
<dbReference type="RefSeq" id="NP_196827.1">
    <property type="nucleotide sequence ID" value="NM_121326.2"/>
</dbReference>
<dbReference type="SMR" id="Q9LYV3"/>
<dbReference type="FunCoup" id="Q9LYV3">
    <property type="interactions" value="42"/>
</dbReference>
<dbReference type="PaxDb" id="3702-AT5G13230.1"/>
<dbReference type="ProteomicsDB" id="249006"/>
<dbReference type="EnsemblPlants" id="AT5G13230.1">
    <property type="protein sequence ID" value="AT5G13230.1"/>
    <property type="gene ID" value="AT5G13230"/>
</dbReference>
<dbReference type="GeneID" id="831163"/>
<dbReference type="Gramene" id="AT5G13230.1">
    <property type="protein sequence ID" value="AT5G13230.1"/>
    <property type="gene ID" value="AT5G13230"/>
</dbReference>
<dbReference type="KEGG" id="ath:AT5G13230"/>
<dbReference type="Araport" id="AT5G13230"/>
<dbReference type="TAIR" id="AT5G13230"/>
<dbReference type="eggNOG" id="KOG4197">
    <property type="taxonomic scope" value="Eukaryota"/>
</dbReference>
<dbReference type="HOGENOM" id="CLU_002706_15_1_1"/>
<dbReference type="InParanoid" id="Q9LYV3"/>
<dbReference type="OMA" id="PSVMIWR"/>
<dbReference type="OrthoDB" id="749581at2759"/>
<dbReference type="PhylomeDB" id="Q9LYV3"/>
<dbReference type="PRO" id="PR:Q9LYV3"/>
<dbReference type="Proteomes" id="UP000006548">
    <property type="component" value="Chromosome 5"/>
</dbReference>
<dbReference type="ExpressionAtlas" id="Q9LYV3">
    <property type="expression patterns" value="baseline and differential"/>
</dbReference>
<dbReference type="GO" id="GO:0005739">
    <property type="term" value="C:mitochondrion"/>
    <property type="evidence" value="ECO:0007669"/>
    <property type="project" value="UniProtKB-SubCell"/>
</dbReference>
<dbReference type="GO" id="GO:0003723">
    <property type="term" value="F:RNA binding"/>
    <property type="evidence" value="ECO:0007669"/>
    <property type="project" value="InterPro"/>
</dbReference>
<dbReference type="GO" id="GO:0008270">
    <property type="term" value="F:zinc ion binding"/>
    <property type="evidence" value="ECO:0007669"/>
    <property type="project" value="InterPro"/>
</dbReference>
<dbReference type="GO" id="GO:0009451">
    <property type="term" value="P:RNA modification"/>
    <property type="evidence" value="ECO:0007669"/>
    <property type="project" value="InterPro"/>
</dbReference>
<dbReference type="FunFam" id="1.25.40.10:FF:000397">
    <property type="entry name" value="Pentatricopeptide repeat-containing protein At2g40720"/>
    <property type="match status" value="1"/>
</dbReference>
<dbReference type="FunFam" id="1.25.40.10:FF:000201">
    <property type="entry name" value="Pentatricopeptide repeat-containing protein mitochondrial"/>
    <property type="match status" value="1"/>
</dbReference>
<dbReference type="FunFam" id="1.25.40.10:FF:000471">
    <property type="entry name" value="Putative pentatricopeptide repeat-containing protein, mitochondrial"/>
    <property type="match status" value="1"/>
</dbReference>
<dbReference type="FunFam" id="1.25.40.10:FF:000494">
    <property type="entry name" value="Putative pentatricopeptide repeat-containing protein, mitochondrial"/>
    <property type="match status" value="1"/>
</dbReference>
<dbReference type="FunFam" id="1.25.40.10:FF:000533">
    <property type="entry name" value="Putative pentatricopeptide repeat-containing protein, mitochondrial"/>
    <property type="match status" value="1"/>
</dbReference>
<dbReference type="Gene3D" id="1.25.40.10">
    <property type="entry name" value="Tetratricopeptide repeat domain"/>
    <property type="match status" value="5"/>
</dbReference>
<dbReference type="InterPro" id="IPR032867">
    <property type="entry name" value="DYW_dom"/>
</dbReference>
<dbReference type="InterPro" id="IPR046848">
    <property type="entry name" value="E_motif"/>
</dbReference>
<dbReference type="InterPro" id="IPR002885">
    <property type="entry name" value="Pentatricopeptide_rpt"/>
</dbReference>
<dbReference type="InterPro" id="IPR046960">
    <property type="entry name" value="PPR_At4g14850-like_plant"/>
</dbReference>
<dbReference type="InterPro" id="IPR011990">
    <property type="entry name" value="TPR-like_helical_dom_sf"/>
</dbReference>
<dbReference type="NCBIfam" id="TIGR00756">
    <property type="entry name" value="PPR"/>
    <property type="match status" value="4"/>
</dbReference>
<dbReference type="PANTHER" id="PTHR47926:SF520">
    <property type="entry name" value="DYW DOMAIN-CONTAINING PROTEIN"/>
    <property type="match status" value="1"/>
</dbReference>
<dbReference type="PANTHER" id="PTHR47926">
    <property type="entry name" value="PENTATRICOPEPTIDE REPEAT-CONTAINING PROTEIN"/>
    <property type="match status" value="1"/>
</dbReference>
<dbReference type="Pfam" id="PF14432">
    <property type="entry name" value="DYW_deaminase"/>
    <property type="match status" value="1"/>
</dbReference>
<dbReference type="Pfam" id="PF20431">
    <property type="entry name" value="E_motif"/>
    <property type="match status" value="1"/>
</dbReference>
<dbReference type="Pfam" id="PF01535">
    <property type="entry name" value="PPR"/>
    <property type="match status" value="6"/>
</dbReference>
<dbReference type="Pfam" id="PF13041">
    <property type="entry name" value="PPR_2"/>
    <property type="match status" value="3"/>
</dbReference>
<dbReference type="PROSITE" id="PS51375">
    <property type="entry name" value="PPR"/>
    <property type="match status" value="15"/>
</dbReference>
<name>PP377_ARATH</name>